<organism>
    <name type="scientific">Pseudomonas fluorescens (strain ATCC BAA-477 / NRRL B-23932 / Pf-5)</name>
    <dbReference type="NCBI Taxonomy" id="220664"/>
    <lineage>
        <taxon>Bacteria</taxon>
        <taxon>Pseudomonadati</taxon>
        <taxon>Pseudomonadota</taxon>
        <taxon>Gammaproteobacteria</taxon>
        <taxon>Pseudomonadales</taxon>
        <taxon>Pseudomonadaceae</taxon>
        <taxon>Pseudomonas</taxon>
    </lineage>
</organism>
<keyword id="KW-0342">GTP-binding</keyword>
<keyword id="KW-0547">Nucleotide-binding</keyword>
<keyword id="KW-0677">Repeat</keyword>
<keyword id="KW-0690">Ribosome biogenesis</keyword>
<gene>
    <name evidence="1" type="primary">der</name>
    <name type="synonym">engA</name>
    <name type="ordered locus">PFL_4950</name>
</gene>
<sequence length="490" mass="54827">MVPVIALVGRPNVGKSTLFNRLTRTRDAIVGDLSGLTRDRQYGEAKWQGRTYILIDTGGISGDEHGMDEKMAEQSLLAIEEADVVLFLVDAKAGFTAADQMIGEHLRKRNKTSYVIANKVDNIDPDMARAEFAPLGMGDAIPIAGAHGRGITQMLEIALSEFPKDDADEPEEGEEEIVAEGEEAKRIPGPSEKDGIKIAIIGRPNVGKSTLVNRMLGEDRVIVYDQPGTTRDSIYIPFERNDEKYTLIDTAGVRKRGKIHEEVEKFSVVKTLQAIKDANVVIFVMDAREGVVDHDLNLLGFALEAGRALVIALNKWDGMQPSERDYVKTELQRRLFFVDFADIHFISALHGTGVGNLYQSVQNSFKSAVTRWPTSRLTQILEDAVGEHAPPMVNNRRIKLRYAHLGGANPPLIVIHGNQVEKVPKSYVRYLENTYRRVLKLVGTPIRIEFKGGENPYEGNKNTLTDRQVNKKRRLMSHHKKADKKRRDKR</sequence>
<name>DER_PSEF5</name>
<comment type="function">
    <text evidence="1">GTPase that plays an essential role in the late steps of ribosome biogenesis.</text>
</comment>
<comment type="subunit">
    <text evidence="1">Associates with the 50S ribosomal subunit.</text>
</comment>
<comment type="similarity">
    <text evidence="1">Belongs to the TRAFAC class TrmE-Era-EngA-EngB-Septin-like GTPase superfamily. EngA (Der) GTPase family.</text>
</comment>
<evidence type="ECO:0000255" key="1">
    <source>
        <dbReference type="HAMAP-Rule" id="MF_00195"/>
    </source>
</evidence>
<evidence type="ECO:0000256" key="2">
    <source>
        <dbReference type="SAM" id="MobiDB-lite"/>
    </source>
</evidence>
<dbReference type="EMBL" id="CP000076">
    <property type="protein sequence ID" value="AAY94179.1"/>
    <property type="molecule type" value="Genomic_DNA"/>
</dbReference>
<dbReference type="RefSeq" id="WP_011063203.1">
    <property type="nucleotide sequence ID" value="NC_004129.6"/>
</dbReference>
<dbReference type="SMR" id="Q4K6V3"/>
<dbReference type="STRING" id="220664.PFL_4950"/>
<dbReference type="GeneID" id="57477932"/>
<dbReference type="KEGG" id="pfl:PFL_4950"/>
<dbReference type="PATRIC" id="fig|220664.5.peg.5071"/>
<dbReference type="eggNOG" id="COG1160">
    <property type="taxonomic scope" value="Bacteria"/>
</dbReference>
<dbReference type="HOGENOM" id="CLU_016077_6_2_6"/>
<dbReference type="Proteomes" id="UP000008540">
    <property type="component" value="Chromosome"/>
</dbReference>
<dbReference type="GO" id="GO:0005525">
    <property type="term" value="F:GTP binding"/>
    <property type="evidence" value="ECO:0007669"/>
    <property type="project" value="UniProtKB-UniRule"/>
</dbReference>
<dbReference type="GO" id="GO:0043022">
    <property type="term" value="F:ribosome binding"/>
    <property type="evidence" value="ECO:0007669"/>
    <property type="project" value="TreeGrafter"/>
</dbReference>
<dbReference type="GO" id="GO:0042254">
    <property type="term" value="P:ribosome biogenesis"/>
    <property type="evidence" value="ECO:0007669"/>
    <property type="project" value="UniProtKB-KW"/>
</dbReference>
<dbReference type="CDD" id="cd01894">
    <property type="entry name" value="EngA1"/>
    <property type="match status" value="1"/>
</dbReference>
<dbReference type="CDD" id="cd01895">
    <property type="entry name" value="EngA2"/>
    <property type="match status" value="1"/>
</dbReference>
<dbReference type="FunFam" id="3.30.300.20:FF:000004">
    <property type="entry name" value="GTPase Der"/>
    <property type="match status" value="1"/>
</dbReference>
<dbReference type="FunFam" id="3.40.50.300:FF:000040">
    <property type="entry name" value="GTPase Der"/>
    <property type="match status" value="1"/>
</dbReference>
<dbReference type="FunFam" id="3.40.50.300:FF:000057">
    <property type="entry name" value="GTPase Der"/>
    <property type="match status" value="1"/>
</dbReference>
<dbReference type="Gene3D" id="3.30.300.20">
    <property type="match status" value="1"/>
</dbReference>
<dbReference type="Gene3D" id="3.40.50.300">
    <property type="entry name" value="P-loop containing nucleotide triphosphate hydrolases"/>
    <property type="match status" value="2"/>
</dbReference>
<dbReference type="HAMAP" id="MF_00195">
    <property type="entry name" value="GTPase_Der"/>
    <property type="match status" value="1"/>
</dbReference>
<dbReference type="InterPro" id="IPR031166">
    <property type="entry name" value="G_ENGA"/>
</dbReference>
<dbReference type="InterPro" id="IPR006073">
    <property type="entry name" value="GTP-bd"/>
</dbReference>
<dbReference type="InterPro" id="IPR016484">
    <property type="entry name" value="GTPase_Der"/>
</dbReference>
<dbReference type="InterPro" id="IPR032859">
    <property type="entry name" value="KH_dom-like"/>
</dbReference>
<dbReference type="InterPro" id="IPR015946">
    <property type="entry name" value="KH_dom-like_a/b"/>
</dbReference>
<dbReference type="InterPro" id="IPR027417">
    <property type="entry name" value="P-loop_NTPase"/>
</dbReference>
<dbReference type="InterPro" id="IPR005225">
    <property type="entry name" value="Small_GTP-bd"/>
</dbReference>
<dbReference type="NCBIfam" id="TIGR03594">
    <property type="entry name" value="GTPase_EngA"/>
    <property type="match status" value="1"/>
</dbReference>
<dbReference type="NCBIfam" id="TIGR00231">
    <property type="entry name" value="small_GTP"/>
    <property type="match status" value="2"/>
</dbReference>
<dbReference type="PANTHER" id="PTHR43834">
    <property type="entry name" value="GTPASE DER"/>
    <property type="match status" value="1"/>
</dbReference>
<dbReference type="PANTHER" id="PTHR43834:SF6">
    <property type="entry name" value="GTPASE DER"/>
    <property type="match status" value="1"/>
</dbReference>
<dbReference type="Pfam" id="PF14714">
    <property type="entry name" value="KH_dom-like"/>
    <property type="match status" value="1"/>
</dbReference>
<dbReference type="Pfam" id="PF01926">
    <property type="entry name" value="MMR_HSR1"/>
    <property type="match status" value="2"/>
</dbReference>
<dbReference type="PIRSF" id="PIRSF006485">
    <property type="entry name" value="GTP-binding_EngA"/>
    <property type="match status" value="1"/>
</dbReference>
<dbReference type="PRINTS" id="PR00326">
    <property type="entry name" value="GTP1OBG"/>
</dbReference>
<dbReference type="SUPFAM" id="SSF52540">
    <property type="entry name" value="P-loop containing nucleoside triphosphate hydrolases"/>
    <property type="match status" value="2"/>
</dbReference>
<dbReference type="PROSITE" id="PS51712">
    <property type="entry name" value="G_ENGA"/>
    <property type="match status" value="2"/>
</dbReference>
<protein>
    <recommendedName>
        <fullName evidence="1">GTPase Der</fullName>
    </recommendedName>
    <alternativeName>
        <fullName evidence="1">GTP-binding protein EngA</fullName>
    </alternativeName>
</protein>
<reference key="1">
    <citation type="journal article" date="2005" name="Nat. Biotechnol.">
        <title>Complete genome sequence of the plant commensal Pseudomonas fluorescens Pf-5.</title>
        <authorList>
            <person name="Paulsen I.T."/>
            <person name="Press C.M."/>
            <person name="Ravel J."/>
            <person name="Kobayashi D.Y."/>
            <person name="Myers G.S.A."/>
            <person name="Mavrodi D.V."/>
            <person name="DeBoy R.T."/>
            <person name="Seshadri R."/>
            <person name="Ren Q."/>
            <person name="Madupu R."/>
            <person name="Dodson R.J."/>
            <person name="Durkin A.S."/>
            <person name="Brinkac L.M."/>
            <person name="Daugherty S.C."/>
            <person name="Sullivan S.A."/>
            <person name="Rosovitz M.J."/>
            <person name="Gwinn M.L."/>
            <person name="Zhou L."/>
            <person name="Schneider D.J."/>
            <person name="Cartinhour S.W."/>
            <person name="Nelson W.C."/>
            <person name="Weidman J."/>
            <person name="Watkins K."/>
            <person name="Tran K."/>
            <person name="Khouri H."/>
            <person name="Pierson E.A."/>
            <person name="Pierson L.S. III"/>
            <person name="Thomashow L.S."/>
            <person name="Loper J.E."/>
        </authorList>
    </citation>
    <scope>NUCLEOTIDE SEQUENCE [LARGE SCALE GENOMIC DNA]</scope>
    <source>
        <strain>ATCC BAA-477 / NRRL B-23932 / Pf-5</strain>
    </source>
</reference>
<accession>Q4K6V3</accession>
<proteinExistence type="inferred from homology"/>
<feature type="chain" id="PRO_1000011701" description="GTPase Der">
    <location>
        <begin position="1"/>
        <end position="490"/>
    </location>
</feature>
<feature type="domain" description="EngA-type G 1">
    <location>
        <begin position="3"/>
        <end position="166"/>
    </location>
</feature>
<feature type="domain" description="EngA-type G 2">
    <location>
        <begin position="196"/>
        <end position="369"/>
    </location>
</feature>
<feature type="domain" description="KH-like" evidence="1">
    <location>
        <begin position="370"/>
        <end position="454"/>
    </location>
</feature>
<feature type="region of interest" description="Disordered" evidence="2">
    <location>
        <begin position="164"/>
        <end position="191"/>
    </location>
</feature>
<feature type="region of interest" description="Disordered" evidence="2">
    <location>
        <begin position="452"/>
        <end position="490"/>
    </location>
</feature>
<feature type="compositionally biased region" description="Acidic residues" evidence="2">
    <location>
        <begin position="166"/>
        <end position="181"/>
    </location>
</feature>
<feature type="compositionally biased region" description="Basic and acidic residues" evidence="2">
    <location>
        <begin position="182"/>
        <end position="191"/>
    </location>
</feature>
<feature type="compositionally biased region" description="Basic residues" evidence="2">
    <location>
        <begin position="470"/>
        <end position="490"/>
    </location>
</feature>
<feature type="binding site" evidence="1">
    <location>
        <begin position="9"/>
        <end position="16"/>
    </location>
    <ligand>
        <name>GTP</name>
        <dbReference type="ChEBI" id="CHEBI:37565"/>
        <label>1</label>
    </ligand>
</feature>
<feature type="binding site" evidence="1">
    <location>
        <begin position="56"/>
        <end position="60"/>
    </location>
    <ligand>
        <name>GTP</name>
        <dbReference type="ChEBI" id="CHEBI:37565"/>
        <label>1</label>
    </ligand>
</feature>
<feature type="binding site" evidence="1">
    <location>
        <begin position="118"/>
        <end position="121"/>
    </location>
    <ligand>
        <name>GTP</name>
        <dbReference type="ChEBI" id="CHEBI:37565"/>
        <label>1</label>
    </ligand>
</feature>
<feature type="binding site" evidence="1">
    <location>
        <begin position="202"/>
        <end position="209"/>
    </location>
    <ligand>
        <name>GTP</name>
        <dbReference type="ChEBI" id="CHEBI:37565"/>
        <label>2</label>
    </ligand>
</feature>
<feature type="binding site" evidence="1">
    <location>
        <begin position="249"/>
        <end position="253"/>
    </location>
    <ligand>
        <name>GTP</name>
        <dbReference type="ChEBI" id="CHEBI:37565"/>
        <label>2</label>
    </ligand>
</feature>
<feature type="binding site" evidence="1">
    <location>
        <begin position="314"/>
        <end position="317"/>
    </location>
    <ligand>
        <name>GTP</name>
        <dbReference type="ChEBI" id="CHEBI:37565"/>
        <label>2</label>
    </ligand>
</feature>